<evidence type="ECO:0000255" key="1">
    <source>
        <dbReference type="HAMAP-Rule" id="MF_01409"/>
    </source>
</evidence>
<organism>
    <name type="scientific">Methanococcoides burtonii (strain DSM 6242 / NBRC 107633 / OCM 468 / ACE-M)</name>
    <dbReference type="NCBI Taxonomy" id="259564"/>
    <lineage>
        <taxon>Archaea</taxon>
        <taxon>Methanobacteriati</taxon>
        <taxon>Methanobacteriota</taxon>
        <taxon>Stenosarchaea group</taxon>
        <taxon>Methanomicrobia</taxon>
        <taxon>Methanosarcinales</taxon>
        <taxon>Methanosarcinaceae</taxon>
        <taxon>Methanococcoides</taxon>
    </lineage>
</organism>
<comment type="function">
    <text evidence="1">Catalyzes the condensation of acetyl-CoA with acetoacetyl-CoA to form 3-hydroxy-3-methylglutaryl-CoA (HMG-CoA). Functions in the mevalonate (MVA) pathway leading to isopentenyl diphosphate (IPP), a key precursor for the biosynthesis of isoprenoid compounds that are building blocks of archaeal membrane lipids.</text>
</comment>
<comment type="catalytic activity">
    <reaction evidence="1">
        <text>acetoacetyl-CoA + acetyl-CoA + H2O = (3S)-3-hydroxy-3-methylglutaryl-CoA + CoA + H(+)</text>
        <dbReference type="Rhea" id="RHEA:10188"/>
        <dbReference type="ChEBI" id="CHEBI:15377"/>
        <dbReference type="ChEBI" id="CHEBI:15378"/>
        <dbReference type="ChEBI" id="CHEBI:43074"/>
        <dbReference type="ChEBI" id="CHEBI:57286"/>
        <dbReference type="ChEBI" id="CHEBI:57287"/>
        <dbReference type="ChEBI" id="CHEBI:57288"/>
        <dbReference type="EC" id="2.3.3.10"/>
    </reaction>
    <physiologicalReaction direction="left-to-right" evidence="1">
        <dbReference type="Rhea" id="RHEA:10189"/>
    </physiologicalReaction>
</comment>
<comment type="pathway">
    <text evidence="1">Metabolic intermediate biosynthesis; (R)-mevalonate biosynthesis; (R)-mevalonate from acetyl-CoA: step 2/3.</text>
</comment>
<comment type="subunit">
    <text evidence="1">Interacts with acetoacetyl-CoA thiolase that catalyzes the precedent step in the pathway and with a DUF35 protein. The acetoacetyl-CoA thiolase/HMG-CoA synthase complex channels the intermediate via a fused CoA-binding site, which allows for efficient coupling of the endergonic thiolase reaction with the exergonic HMGCS reaction.</text>
</comment>
<comment type="similarity">
    <text evidence="1">Belongs to the thiolase-like superfamily. Archaeal HMG-CoA synthase family.</text>
</comment>
<keyword id="KW-0012">Acyltransferase</keyword>
<keyword id="KW-0414">Isoprene biosynthesis</keyword>
<keyword id="KW-0808">Transferase</keyword>
<protein>
    <recommendedName>
        <fullName evidence="1">Hydroxymethylglutaryl-CoA synthase</fullName>
        <shortName evidence="1">HMG-CoA synthase</shortName>
        <shortName evidence="1">HMGCS</shortName>
        <ecNumber evidence="1">2.3.3.10</ecNumber>
    </recommendedName>
</protein>
<name>HMGCS_METBU</name>
<sequence>MSVGIVSYGAYIPKFRIKVEDIARVWGDDADILSAGLMVYEKSVPDLDEDTATIAVEAARSAVLRNNIDAKRIGAVYTGSESHPYAVKPTSTIVAEAIEATPVLTAADFEFACKAGTAAMQACMGLVGSGMVDLGMAIGADVSQGAPGDALEYTAAAGGVSYIIGNKESEMIAVIEDTFSFTTDTPDFWRREGMPYPEHGGRFTGEPGYFKHVTGAANGLMEKMGTKPSDYDYAVFHQPNGKFPSRVAKMLGFTKEQIKPGLVVPWLGNTYSGSCMMGIAATLDQAKPGDRIFATAFGSGAGGDAFSFRVTDKIDEVRDAAPKVLDLLKDPVYMDYAMYAKHKGKIRLA</sequence>
<dbReference type="EC" id="2.3.3.10" evidence="1"/>
<dbReference type="EMBL" id="CP000300">
    <property type="protein sequence ID" value="ABE52813.1"/>
    <property type="molecule type" value="Genomic_DNA"/>
</dbReference>
<dbReference type="RefSeq" id="WP_011499955.1">
    <property type="nucleotide sequence ID" value="NC_007955.1"/>
</dbReference>
<dbReference type="SMR" id="Q12UR3"/>
<dbReference type="STRING" id="259564.Mbur_1932"/>
<dbReference type="GeneID" id="3997833"/>
<dbReference type="KEGG" id="mbu:Mbur_1932"/>
<dbReference type="HOGENOM" id="CLU_039592_7_0_2"/>
<dbReference type="OrthoDB" id="5812at2157"/>
<dbReference type="UniPathway" id="UPA00058">
    <property type="reaction ID" value="UER00102"/>
</dbReference>
<dbReference type="Proteomes" id="UP000001979">
    <property type="component" value="Chromosome"/>
</dbReference>
<dbReference type="GO" id="GO:0003985">
    <property type="term" value="F:acetyl-CoA C-acetyltransferase activity"/>
    <property type="evidence" value="ECO:0007669"/>
    <property type="project" value="UniProtKB-UniRule"/>
</dbReference>
<dbReference type="GO" id="GO:0004421">
    <property type="term" value="F:hydroxymethylglutaryl-CoA synthase activity"/>
    <property type="evidence" value="ECO:0007669"/>
    <property type="project" value="InterPro"/>
</dbReference>
<dbReference type="GO" id="GO:0010142">
    <property type="term" value="P:farnesyl diphosphate biosynthetic process, mevalonate pathway"/>
    <property type="evidence" value="ECO:0007669"/>
    <property type="project" value="TreeGrafter"/>
</dbReference>
<dbReference type="GO" id="GO:0019287">
    <property type="term" value="P:isopentenyl diphosphate biosynthetic process, mevalonate pathway"/>
    <property type="evidence" value="ECO:0007669"/>
    <property type="project" value="UniProtKB-UniRule"/>
</dbReference>
<dbReference type="CDD" id="cd00827">
    <property type="entry name" value="init_cond_enzymes"/>
    <property type="match status" value="1"/>
</dbReference>
<dbReference type="FunFam" id="3.40.47.10:FF:000046">
    <property type="entry name" value="UPF0219 protein M1627_1703"/>
    <property type="match status" value="1"/>
</dbReference>
<dbReference type="Gene3D" id="3.40.47.10">
    <property type="match status" value="1"/>
</dbReference>
<dbReference type="HAMAP" id="MF_01409">
    <property type="entry name" value="HMG_CoA_synth_arch"/>
    <property type="match status" value="1"/>
</dbReference>
<dbReference type="InterPro" id="IPR013747">
    <property type="entry name" value="ACP_syn_III_C"/>
</dbReference>
<dbReference type="InterPro" id="IPR004656">
    <property type="entry name" value="HMG_CoA_Synthase"/>
</dbReference>
<dbReference type="InterPro" id="IPR016039">
    <property type="entry name" value="Thiolase-like"/>
</dbReference>
<dbReference type="NCBIfam" id="TIGR00748">
    <property type="entry name" value="HMG_CoA_syn_Arc"/>
    <property type="match status" value="1"/>
</dbReference>
<dbReference type="NCBIfam" id="NF003274">
    <property type="entry name" value="PRK04262.1"/>
    <property type="match status" value="1"/>
</dbReference>
<dbReference type="PANTHER" id="PTHR43323">
    <property type="entry name" value="3-HYDROXY-3-METHYLGLUTARYL COENZYME A SYNTHASE"/>
    <property type="match status" value="1"/>
</dbReference>
<dbReference type="PANTHER" id="PTHR43323:SF2">
    <property type="entry name" value="HYDROXYMETHYLGLUTARYL-COA SYNTHASE"/>
    <property type="match status" value="1"/>
</dbReference>
<dbReference type="Pfam" id="PF08541">
    <property type="entry name" value="ACP_syn_III_C"/>
    <property type="match status" value="1"/>
</dbReference>
<dbReference type="SUPFAM" id="SSF53901">
    <property type="entry name" value="Thiolase-like"/>
    <property type="match status" value="2"/>
</dbReference>
<proteinExistence type="inferred from homology"/>
<accession>Q12UR3</accession>
<reference key="1">
    <citation type="journal article" date="2009" name="ISME J.">
        <title>The genome sequence of the psychrophilic archaeon, Methanococcoides burtonii: the role of genome evolution in cold adaptation.</title>
        <authorList>
            <person name="Allen M.A."/>
            <person name="Lauro F.M."/>
            <person name="Williams T.J."/>
            <person name="Burg D."/>
            <person name="Siddiqui K.S."/>
            <person name="De Francisci D."/>
            <person name="Chong K.W."/>
            <person name="Pilak O."/>
            <person name="Chew H.H."/>
            <person name="De Maere M.Z."/>
            <person name="Ting L."/>
            <person name="Katrib M."/>
            <person name="Ng C."/>
            <person name="Sowers K.R."/>
            <person name="Galperin M.Y."/>
            <person name="Anderson I.J."/>
            <person name="Ivanova N."/>
            <person name="Dalin E."/>
            <person name="Martinez M."/>
            <person name="Lapidus A."/>
            <person name="Hauser L."/>
            <person name="Land M."/>
            <person name="Thomas T."/>
            <person name="Cavicchioli R."/>
        </authorList>
    </citation>
    <scope>NUCLEOTIDE SEQUENCE [LARGE SCALE GENOMIC DNA]</scope>
    <source>
        <strain>DSM 6242 / NBRC 107633 / OCM 468 / ACE-M</strain>
    </source>
</reference>
<gene>
    <name type="ordered locus">Mbur_1932</name>
</gene>
<feature type="chain" id="PRO_1000068440" description="Hydroxymethylglutaryl-CoA synthase">
    <location>
        <begin position="1"/>
        <end position="349"/>
    </location>
</feature>
<feature type="active site" description="Proton donor/acceptor" evidence="1">
    <location>
        <position position="81"/>
    </location>
</feature>
<feature type="active site" description="Acyl-thioester intermediate" evidence="1">
    <location>
        <position position="113"/>
    </location>
</feature>
<feature type="active site" description="Proton donor/acceptor" evidence="1">
    <location>
        <position position="237"/>
    </location>
</feature>
<feature type="binding site" evidence="1">
    <location>
        <position position="29"/>
    </location>
    <ligand>
        <name>(3S)-3-hydroxy-3-methylglutaryl-CoA</name>
        <dbReference type="ChEBI" id="CHEBI:43074"/>
    </ligand>
</feature>
<feature type="binding site" evidence="1">
    <location>
        <position position="30"/>
    </location>
    <ligand>
        <name>(3S)-3-hydroxy-3-methylglutaryl-CoA</name>
        <dbReference type="ChEBI" id="CHEBI:43074"/>
    </ligand>
</feature>
<feature type="binding site" evidence="1">
    <location>
        <position position="113"/>
    </location>
    <ligand>
        <name>(3S)-3-hydroxy-3-methylglutaryl-CoA</name>
        <dbReference type="ChEBI" id="CHEBI:43074"/>
    </ligand>
</feature>
<feature type="binding site" evidence="1">
    <location>
        <position position="154"/>
    </location>
    <ligand>
        <name>(3S)-3-hydroxy-3-methylglutaryl-CoA</name>
        <dbReference type="ChEBI" id="CHEBI:43074"/>
    </ligand>
</feature>
<feature type="binding site" evidence="1">
    <location>
        <position position="202"/>
    </location>
    <ligand>
        <name>CoA</name>
        <dbReference type="ChEBI" id="CHEBI:57287"/>
        <note>ligand shared with acetoacetyl-CoA thiolase</note>
    </ligand>
</feature>
<feature type="binding site" evidence="1">
    <location>
        <position position="204"/>
    </location>
    <ligand>
        <name>(3S)-3-hydroxy-3-methylglutaryl-CoA</name>
        <dbReference type="ChEBI" id="CHEBI:43074"/>
    </ligand>
</feature>
<feature type="binding site" evidence="1">
    <location>
        <position position="237"/>
    </location>
    <ligand>
        <name>(3S)-3-hydroxy-3-methylglutaryl-CoA</name>
        <dbReference type="ChEBI" id="CHEBI:43074"/>
    </ligand>
</feature>
<feature type="binding site" evidence="1">
    <location>
        <position position="242"/>
    </location>
    <ligand>
        <name>CoA</name>
        <dbReference type="ChEBI" id="CHEBI:57287"/>
        <note>ligand shared with acetoacetyl-CoA thiolase</note>
    </ligand>
</feature>
<feature type="binding site" evidence="1">
    <location>
        <position position="246"/>
    </location>
    <ligand>
        <name>(3S)-3-hydroxy-3-methylglutaryl-CoA</name>
        <dbReference type="ChEBI" id="CHEBI:43074"/>
    </ligand>
</feature>
<feature type="binding site" evidence="1">
    <location>
        <position position="269"/>
    </location>
    <ligand>
        <name>(3S)-3-hydroxy-3-methylglutaryl-CoA</name>
        <dbReference type="ChEBI" id="CHEBI:43074"/>
    </ligand>
</feature>
<feature type="binding site" evidence="1">
    <location>
        <position position="299"/>
    </location>
    <ligand>
        <name>(3S)-3-hydroxy-3-methylglutaryl-CoA</name>
        <dbReference type="ChEBI" id="CHEBI:43074"/>
    </ligand>
</feature>